<organism>
    <name type="scientific">Limosilactobacillus reuteri (strain DSM 20016)</name>
    <name type="common">Lactobacillus reuteri</name>
    <dbReference type="NCBI Taxonomy" id="557436"/>
    <lineage>
        <taxon>Bacteria</taxon>
        <taxon>Bacillati</taxon>
        <taxon>Bacillota</taxon>
        <taxon>Bacilli</taxon>
        <taxon>Lactobacillales</taxon>
        <taxon>Lactobacillaceae</taxon>
        <taxon>Limosilactobacillus</taxon>
    </lineage>
</organism>
<reference key="1">
    <citation type="journal article" date="2011" name="PLoS Genet.">
        <title>The evolution of host specialization in the vertebrate gut symbiont Lactobacillus reuteri.</title>
        <authorList>
            <person name="Frese S.A."/>
            <person name="Benson A.K."/>
            <person name="Tannock G.W."/>
            <person name="Loach D.M."/>
            <person name="Kim J."/>
            <person name="Zhang M."/>
            <person name="Oh P.L."/>
            <person name="Heng N.C."/>
            <person name="Patil P.B."/>
            <person name="Juge N."/>
            <person name="Mackenzie D.A."/>
            <person name="Pearson B.M."/>
            <person name="Lapidus A."/>
            <person name="Dalin E."/>
            <person name="Tice H."/>
            <person name="Goltsman E."/>
            <person name="Land M."/>
            <person name="Hauser L."/>
            <person name="Ivanova N."/>
            <person name="Kyrpides N.C."/>
            <person name="Walter J."/>
        </authorList>
    </citation>
    <scope>NUCLEOTIDE SEQUENCE [LARGE SCALE GENOMIC DNA]</scope>
    <source>
        <strain>DSM 20016</strain>
    </source>
</reference>
<evidence type="ECO:0000255" key="1">
    <source>
        <dbReference type="HAMAP-Rule" id="MF_00227"/>
    </source>
</evidence>
<gene>
    <name evidence="1" type="primary">rnpA</name>
    <name type="ordered locus">Lreu_1943</name>
</gene>
<feature type="chain" id="PRO_1000058752" description="Ribonuclease P protein component">
    <location>
        <begin position="1"/>
        <end position="117"/>
    </location>
</feature>
<keyword id="KW-0255">Endonuclease</keyword>
<keyword id="KW-0378">Hydrolase</keyword>
<keyword id="KW-0540">Nuclease</keyword>
<keyword id="KW-1185">Reference proteome</keyword>
<keyword id="KW-0694">RNA-binding</keyword>
<keyword id="KW-0819">tRNA processing</keyword>
<comment type="function">
    <text evidence="1">RNaseP catalyzes the removal of the 5'-leader sequence from pre-tRNA to produce the mature 5'-terminus. It can also cleave other RNA substrates such as 4.5S RNA. The protein component plays an auxiliary but essential role in vivo by binding to the 5'-leader sequence and broadening the substrate specificity of the ribozyme.</text>
</comment>
<comment type="catalytic activity">
    <reaction evidence="1">
        <text>Endonucleolytic cleavage of RNA, removing 5'-extranucleotides from tRNA precursor.</text>
        <dbReference type="EC" id="3.1.26.5"/>
    </reaction>
</comment>
<comment type="subunit">
    <text evidence="1">Consists of a catalytic RNA component (M1 or rnpB) and a protein subunit.</text>
</comment>
<comment type="similarity">
    <text evidence="1">Belongs to the RnpA family.</text>
</comment>
<dbReference type="EC" id="3.1.26.5" evidence="1"/>
<dbReference type="EMBL" id="CP000705">
    <property type="protein sequence ID" value="ABQ84175.1"/>
    <property type="molecule type" value="Genomic_DNA"/>
</dbReference>
<dbReference type="RefSeq" id="WP_003669484.1">
    <property type="nucleotide sequence ID" value="NC_009513.1"/>
</dbReference>
<dbReference type="SMR" id="A5VMV1"/>
<dbReference type="STRING" id="557436.Lreu_1943"/>
<dbReference type="KEGG" id="lre:Lreu_1943"/>
<dbReference type="eggNOG" id="COG0594">
    <property type="taxonomic scope" value="Bacteria"/>
</dbReference>
<dbReference type="HOGENOM" id="CLU_117179_9_1_9"/>
<dbReference type="Proteomes" id="UP000001991">
    <property type="component" value="Chromosome"/>
</dbReference>
<dbReference type="GO" id="GO:0030677">
    <property type="term" value="C:ribonuclease P complex"/>
    <property type="evidence" value="ECO:0007669"/>
    <property type="project" value="TreeGrafter"/>
</dbReference>
<dbReference type="GO" id="GO:0042781">
    <property type="term" value="F:3'-tRNA processing endoribonuclease activity"/>
    <property type="evidence" value="ECO:0007669"/>
    <property type="project" value="TreeGrafter"/>
</dbReference>
<dbReference type="GO" id="GO:0004526">
    <property type="term" value="F:ribonuclease P activity"/>
    <property type="evidence" value="ECO:0007669"/>
    <property type="project" value="UniProtKB-UniRule"/>
</dbReference>
<dbReference type="GO" id="GO:0000049">
    <property type="term" value="F:tRNA binding"/>
    <property type="evidence" value="ECO:0007669"/>
    <property type="project" value="UniProtKB-UniRule"/>
</dbReference>
<dbReference type="GO" id="GO:0001682">
    <property type="term" value="P:tRNA 5'-leader removal"/>
    <property type="evidence" value="ECO:0007669"/>
    <property type="project" value="UniProtKB-UniRule"/>
</dbReference>
<dbReference type="FunFam" id="3.30.230.10:FF:000021">
    <property type="entry name" value="Ribonuclease P protein component"/>
    <property type="match status" value="1"/>
</dbReference>
<dbReference type="Gene3D" id="3.30.230.10">
    <property type="match status" value="1"/>
</dbReference>
<dbReference type="HAMAP" id="MF_00227">
    <property type="entry name" value="RNase_P"/>
    <property type="match status" value="1"/>
</dbReference>
<dbReference type="InterPro" id="IPR020568">
    <property type="entry name" value="Ribosomal_Su5_D2-typ_SF"/>
</dbReference>
<dbReference type="InterPro" id="IPR014721">
    <property type="entry name" value="Ribsml_uS5_D2-typ_fold_subgr"/>
</dbReference>
<dbReference type="InterPro" id="IPR000100">
    <property type="entry name" value="RNase_P"/>
</dbReference>
<dbReference type="NCBIfam" id="TIGR00188">
    <property type="entry name" value="rnpA"/>
    <property type="match status" value="1"/>
</dbReference>
<dbReference type="PANTHER" id="PTHR33992">
    <property type="entry name" value="RIBONUCLEASE P PROTEIN COMPONENT"/>
    <property type="match status" value="1"/>
</dbReference>
<dbReference type="PANTHER" id="PTHR33992:SF1">
    <property type="entry name" value="RIBONUCLEASE P PROTEIN COMPONENT"/>
    <property type="match status" value="1"/>
</dbReference>
<dbReference type="Pfam" id="PF00825">
    <property type="entry name" value="Ribonuclease_P"/>
    <property type="match status" value="1"/>
</dbReference>
<dbReference type="SUPFAM" id="SSF54211">
    <property type="entry name" value="Ribosomal protein S5 domain 2-like"/>
    <property type="match status" value="1"/>
</dbReference>
<name>RNPA_LIMRD</name>
<sequence>MRKSYRIKKESEFQRVFETHNSVANHKFVVYQMEKPGQKHFRVGISVGKKIGNAVHRNWVKRRIRQTLLEVKPQLRSDVDFLVIARSAADGLSMAETKKNLVHVLNRAHLLDEKSED</sequence>
<proteinExistence type="inferred from homology"/>
<protein>
    <recommendedName>
        <fullName evidence="1">Ribonuclease P protein component</fullName>
        <shortName evidence="1">RNase P protein</shortName>
        <shortName evidence="1">RNaseP protein</shortName>
        <ecNumber evidence="1">3.1.26.5</ecNumber>
    </recommendedName>
    <alternativeName>
        <fullName evidence="1">Protein C5</fullName>
    </alternativeName>
</protein>
<accession>A5VMV1</accession>